<accession>Q31D36</accession>
<feature type="chain" id="PRO_0000352191" description="NAD(P)H-quinone oxidoreductase subunit M">
    <location>
        <begin position="1"/>
        <end position="115"/>
    </location>
</feature>
<name>NDHM_PROM9</name>
<proteinExistence type="inferred from homology"/>
<sequence length="115" mass="13440">MEKMLLKSTTRHVRIFTAEVVDNELQFHPNKLTLDLDPDNEFIWNEDSLNEINKKFNELIKERAGKDLDDYELRKIGSEIEGLIKILLQNGQLSYNPDCRVMNYSMGLPKTNEVL</sequence>
<keyword id="KW-0472">Membrane</keyword>
<keyword id="KW-0520">NAD</keyword>
<keyword id="KW-0521">NADP</keyword>
<keyword id="KW-0618">Plastoquinone</keyword>
<keyword id="KW-0874">Quinone</keyword>
<keyword id="KW-0793">Thylakoid</keyword>
<keyword id="KW-1278">Translocase</keyword>
<keyword id="KW-0813">Transport</keyword>
<comment type="function">
    <text evidence="1">NDH-1 shuttles electrons from an unknown electron donor, via FMN and iron-sulfur (Fe-S) centers, to quinones in the respiratory and/or the photosynthetic chain. The immediate electron acceptor for the enzyme in this species is believed to be plastoquinone. Couples the redox reaction to proton translocation, and thus conserves the redox energy in a proton gradient. Cyanobacterial NDH-1 also plays a role in inorganic carbon-concentration.</text>
</comment>
<comment type="catalytic activity">
    <reaction evidence="1">
        <text>a plastoquinone + NADH + (n+1) H(+)(in) = a plastoquinol + NAD(+) + n H(+)(out)</text>
        <dbReference type="Rhea" id="RHEA:42608"/>
        <dbReference type="Rhea" id="RHEA-COMP:9561"/>
        <dbReference type="Rhea" id="RHEA-COMP:9562"/>
        <dbReference type="ChEBI" id="CHEBI:15378"/>
        <dbReference type="ChEBI" id="CHEBI:17757"/>
        <dbReference type="ChEBI" id="CHEBI:57540"/>
        <dbReference type="ChEBI" id="CHEBI:57945"/>
        <dbReference type="ChEBI" id="CHEBI:62192"/>
    </reaction>
</comment>
<comment type="catalytic activity">
    <reaction evidence="1">
        <text>a plastoquinone + NADPH + (n+1) H(+)(in) = a plastoquinol + NADP(+) + n H(+)(out)</text>
        <dbReference type="Rhea" id="RHEA:42612"/>
        <dbReference type="Rhea" id="RHEA-COMP:9561"/>
        <dbReference type="Rhea" id="RHEA-COMP:9562"/>
        <dbReference type="ChEBI" id="CHEBI:15378"/>
        <dbReference type="ChEBI" id="CHEBI:17757"/>
        <dbReference type="ChEBI" id="CHEBI:57783"/>
        <dbReference type="ChEBI" id="CHEBI:58349"/>
        <dbReference type="ChEBI" id="CHEBI:62192"/>
    </reaction>
</comment>
<comment type="subunit">
    <text evidence="1">NDH-1 can be composed of about 15 different subunits; different subcomplexes with different compositions have been identified which probably have different functions.</text>
</comment>
<comment type="subcellular location">
    <subcellularLocation>
        <location evidence="1">Cellular thylakoid membrane</location>
        <topology evidence="1">Peripheral membrane protein</topology>
        <orientation evidence="1">Cytoplasmic side</orientation>
    </subcellularLocation>
</comment>
<comment type="similarity">
    <text evidence="1">Belongs to the complex I NdhM subunit family.</text>
</comment>
<gene>
    <name evidence="1" type="primary">ndhM</name>
    <name type="ordered locus">PMT9312_0147</name>
</gene>
<organism>
    <name type="scientific">Prochlorococcus marinus (strain MIT 9312)</name>
    <dbReference type="NCBI Taxonomy" id="74546"/>
    <lineage>
        <taxon>Bacteria</taxon>
        <taxon>Bacillati</taxon>
        <taxon>Cyanobacteriota</taxon>
        <taxon>Cyanophyceae</taxon>
        <taxon>Synechococcales</taxon>
        <taxon>Prochlorococcaceae</taxon>
        <taxon>Prochlorococcus</taxon>
    </lineage>
</organism>
<protein>
    <recommendedName>
        <fullName evidence="1">NAD(P)H-quinone oxidoreductase subunit M</fullName>
        <ecNumber evidence="1">7.1.1.-</ecNumber>
    </recommendedName>
    <alternativeName>
        <fullName evidence="1">NAD(P)H dehydrogenase I subunit M</fullName>
        <shortName evidence="1">NDH-1 subunit M</shortName>
        <shortName evidence="1">NDH-M</shortName>
    </alternativeName>
</protein>
<reference key="1">
    <citation type="journal article" date="2006" name="Science">
        <title>Genomic islands and the ecology and evolution of Prochlorococcus.</title>
        <authorList>
            <person name="Coleman M.L."/>
            <person name="Sullivan M.B."/>
            <person name="Martiny A.C."/>
            <person name="Steglich C."/>
            <person name="Barry K."/>
            <person name="Delong E.F."/>
            <person name="Chisholm S.W."/>
        </authorList>
    </citation>
    <scope>NUCLEOTIDE SEQUENCE [LARGE SCALE GENOMIC DNA]</scope>
    <source>
        <strain>MIT 9312</strain>
    </source>
</reference>
<evidence type="ECO:0000255" key="1">
    <source>
        <dbReference type="HAMAP-Rule" id="MF_01352"/>
    </source>
</evidence>
<dbReference type="EC" id="7.1.1.-" evidence="1"/>
<dbReference type="EMBL" id="CP000111">
    <property type="protein sequence ID" value="ABB49209.1"/>
    <property type="molecule type" value="Genomic_DNA"/>
</dbReference>
<dbReference type="RefSeq" id="WP_011375713.1">
    <property type="nucleotide sequence ID" value="NC_007577.1"/>
</dbReference>
<dbReference type="SMR" id="Q31D36"/>
<dbReference type="STRING" id="74546.PMT9312_0147"/>
<dbReference type="KEGG" id="pmi:PMT9312_0147"/>
<dbReference type="eggNOG" id="ENOG5031AQM">
    <property type="taxonomic scope" value="Bacteria"/>
</dbReference>
<dbReference type="HOGENOM" id="CLU_137431_0_0_3"/>
<dbReference type="OrthoDB" id="461686at2"/>
<dbReference type="Proteomes" id="UP000002715">
    <property type="component" value="Chromosome"/>
</dbReference>
<dbReference type="GO" id="GO:0031676">
    <property type="term" value="C:plasma membrane-derived thylakoid membrane"/>
    <property type="evidence" value="ECO:0007669"/>
    <property type="project" value="UniProtKB-SubCell"/>
</dbReference>
<dbReference type="GO" id="GO:0016655">
    <property type="term" value="F:oxidoreductase activity, acting on NAD(P)H, quinone or similar compound as acceptor"/>
    <property type="evidence" value="ECO:0007669"/>
    <property type="project" value="UniProtKB-UniRule"/>
</dbReference>
<dbReference type="GO" id="GO:0048038">
    <property type="term" value="F:quinone binding"/>
    <property type="evidence" value="ECO:0007669"/>
    <property type="project" value="UniProtKB-KW"/>
</dbReference>
<dbReference type="HAMAP" id="MF_01352">
    <property type="entry name" value="NDH1_NDH1M"/>
    <property type="match status" value="1"/>
</dbReference>
<dbReference type="InterPro" id="IPR018922">
    <property type="entry name" value="NdhM"/>
</dbReference>
<dbReference type="PANTHER" id="PTHR36900">
    <property type="entry name" value="NAD(P)H-QUINONE OXIDOREDUCTASE SUBUNIT M, CHLOROPLASTIC"/>
    <property type="match status" value="1"/>
</dbReference>
<dbReference type="PANTHER" id="PTHR36900:SF1">
    <property type="entry name" value="NAD(P)H-QUINONE OXIDOREDUCTASE SUBUNIT M, CHLOROPLASTIC"/>
    <property type="match status" value="1"/>
</dbReference>
<dbReference type="Pfam" id="PF10664">
    <property type="entry name" value="NdhM"/>
    <property type="match status" value="1"/>
</dbReference>